<protein>
    <recommendedName>
        <fullName evidence="1">Aspartate carbamoyltransferase regulatory chain</fullName>
    </recommendedName>
</protein>
<sequence>MSRELIVSKIRSGTVIDHIPAGRALAVLRILGITGKEGVRIALVMNVESKKLGKKDIIKIEDRELTPEEVNIISAVAPTATINIIEDFRVVRKFKVTPPEVIRGKFKCRNPTCITNAPREPVEPTFYLVRREPPLFICAYCGRYHELSDLI</sequence>
<feature type="chain" id="PRO_0000321509" description="Aspartate carbamoyltransferase regulatory chain">
    <location>
        <begin position="1"/>
        <end position="151"/>
    </location>
</feature>
<feature type="binding site" evidence="1">
    <location>
        <position position="108"/>
    </location>
    <ligand>
        <name>Zn(2+)</name>
        <dbReference type="ChEBI" id="CHEBI:29105"/>
    </ligand>
</feature>
<feature type="binding site" evidence="1">
    <location>
        <position position="113"/>
    </location>
    <ligand>
        <name>Zn(2+)</name>
        <dbReference type="ChEBI" id="CHEBI:29105"/>
    </ligand>
</feature>
<feature type="binding site" evidence="1">
    <location>
        <position position="138"/>
    </location>
    <ligand>
        <name>Zn(2+)</name>
        <dbReference type="ChEBI" id="CHEBI:29105"/>
    </ligand>
</feature>
<feature type="binding site" evidence="1">
    <location>
        <position position="141"/>
    </location>
    <ligand>
        <name>Zn(2+)</name>
        <dbReference type="ChEBI" id="CHEBI:29105"/>
    </ligand>
</feature>
<keyword id="KW-0479">Metal-binding</keyword>
<keyword id="KW-0665">Pyrimidine biosynthesis</keyword>
<keyword id="KW-0862">Zinc</keyword>
<evidence type="ECO:0000255" key="1">
    <source>
        <dbReference type="HAMAP-Rule" id="MF_00002"/>
    </source>
</evidence>
<evidence type="ECO:0000305" key="2"/>
<proteinExistence type="inferred from homology"/>
<gene>
    <name evidence="1" type="primary">pyrI</name>
    <name type="ordered locus">Pisl_0505</name>
</gene>
<organism>
    <name type="scientific">Pyrobaculum islandicum (strain DSM 4184 / JCM 9189 / GEO3)</name>
    <dbReference type="NCBI Taxonomy" id="384616"/>
    <lineage>
        <taxon>Archaea</taxon>
        <taxon>Thermoproteota</taxon>
        <taxon>Thermoprotei</taxon>
        <taxon>Thermoproteales</taxon>
        <taxon>Thermoproteaceae</taxon>
        <taxon>Pyrobaculum</taxon>
    </lineage>
</organism>
<reference key="1">
    <citation type="submission" date="2006-12" db="EMBL/GenBank/DDBJ databases">
        <title>Complete sequence of Pyrobaculum islandicum DSM 4184.</title>
        <authorList>
            <person name="Copeland A."/>
            <person name="Lucas S."/>
            <person name="Lapidus A."/>
            <person name="Barry K."/>
            <person name="Detter J.C."/>
            <person name="Glavina del Rio T."/>
            <person name="Dalin E."/>
            <person name="Tice H."/>
            <person name="Pitluck S."/>
            <person name="Meincke L."/>
            <person name="Brettin T."/>
            <person name="Bruce D."/>
            <person name="Han C."/>
            <person name="Tapia R."/>
            <person name="Gilna P."/>
            <person name="Schmutz J."/>
            <person name="Larimer F."/>
            <person name="Land M."/>
            <person name="Hauser L."/>
            <person name="Kyrpides N."/>
            <person name="Mikhailova N."/>
            <person name="Cozen A.E."/>
            <person name="Fitz-Gibbon S.T."/>
            <person name="House C.H."/>
            <person name="Saltikov C."/>
            <person name="Lowe T."/>
            <person name="Richardson P."/>
        </authorList>
    </citation>
    <scope>NUCLEOTIDE SEQUENCE [LARGE SCALE GENOMIC DNA]</scope>
    <source>
        <strain>DSM 4184 / JCM 9189 / GEO3</strain>
    </source>
</reference>
<dbReference type="EMBL" id="CP000504">
    <property type="protein sequence ID" value="ABL87683.1"/>
    <property type="status" value="ALT_INIT"/>
    <property type="molecule type" value="Genomic_DNA"/>
</dbReference>
<dbReference type="RefSeq" id="WP_053240282.1">
    <property type="nucleotide sequence ID" value="NC_008701.1"/>
</dbReference>
<dbReference type="SMR" id="A1RRV1"/>
<dbReference type="STRING" id="384616.Pisl_0505"/>
<dbReference type="GeneID" id="4617042"/>
<dbReference type="KEGG" id="pis:Pisl_0505"/>
<dbReference type="eggNOG" id="arCOG04229">
    <property type="taxonomic scope" value="Archaea"/>
</dbReference>
<dbReference type="HOGENOM" id="CLU_128576_0_0_2"/>
<dbReference type="OrthoDB" id="7000at2157"/>
<dbReference type="Proteomes" id="UP000002595">
    <property type="component" value="Chromosome"/>
</dbReference>
<dbReference type="GO" id="GO:0009347">
    <property type="term" value="C:aspartate carbamoyltransferase complex"/>
    <property type="evidence" value="ECO:0007669"/>
    <property type="project" value="InterPro"/>
</dbReference>
<dbReference type="GO" id="GO:0046872">
    <property type="term" value="F:metal ion binding"/>
    <property type="evidence" value="ECO:0007669"/>
    <property type="project" value="UniProtKB-KW"/>
</dbReference>
<dbReference type="GO" id="GO:0006207">
    <property type="term" value="P:'de novo' pyrimidine nucleobase biosynthetic process"/>
    <property type="evidence" value="ECO:0007669"/>
    <property type="project" value="InterPro"/>
</dbReference>
<dbReference type="GO" id="GO:0006221">
    <property type="term" value="P:pyrimidine nucleotide biosynthetic process"/>
    <property type="evidence" value="ECO:0007669"/>
    <property type="project" value="UniProtKB-UniRule"/>
</dbReference>
<dbReference type="Gene3D" id="2.30.30.20">
    <property type="entry name" value="Aspartate carbamoyltransferase regulatory subunit, C-terminal domain"/>
    <property type="match status" value="1"/>
</dbReference>
<dbReference type="Gene3D" id="3.30.70.140">
    <property type="entry name" value="Aspartate carbamoyltransferase regulatory subunit, N-terminal domain"/>
    <property type="match status" value="1"/>
</dbReference>
<dbReference type="HAMAP" id="MF_00002">
    <property type="entry name" value="Asp_carb_tr_reg"/>
    <property type="match status" value="1"/>
</dbReference>
<dbReference type="InterPro" id="IPR020545">
    <property type="entry name" value="Asp_carbamoyltransf_reg_N"/>
</dbReference>
<dbReference type="InterPro" id="IPR002801">
    <property type="entry name" value="Asp_carbamoylTrfase_reg"/>
</dbReference>
<dbReference type="InterPro" id="IPR020542">
    <property type="entry name" value="Asp_carbamoyltrfase_reg_C"/>
</dbReference>
<dbReference type="InterPro" id="IPR036792">
    <property type="entry name" value="Asp_carbatrfase_reg_C_sf"/>
</dbReference>
<dbReference type="InterPro" id="IPR036793">
    <property type="entry name" value="Asp_carbatrfase_reg_N_sf"/>
</dbReference>
<dbReference type="NCBIfam" id="TIGR00240">
    <property type="entry name" value="ATCase_reg"/>
    <property type="match status" value="1"/>
</dbReference>
<dbReference type="PANTHER" id="PTHR35805">
    <property type="entry name" value="ASPARTATE CARBAMOYLTRANSFERASE REGULATORY CHAIN"/>
    <property type="match status" value="1"/>
</dbReference>
<dbReference type="PANTHER" id="PTHR35805:SF1">
    <property type="entry name" value="ASPARTATE CARBAMOYLTRANSFERASE REGULATORY CHAIN"/>
    <property type="match status" value="1"/>
</dbReference>
<dbReference type="Pfam" id="PF01948">
    <property type="entry name" value="PyrI"/>
    <property type="match status" value="1"/>
</dbReference>
<dbReference type="Pfam" id="PF02748">
    <property type="entry name" value="PyrI_C"/>
    <property type="match status" value="1"/>
</dbReference>
<dbReference type="SUPFAM" id="SSF57825">
    <property type="entry name" value="Aspartate carbamoyltransferase, Regulatory-chain, C-terminal domain"/>
    <property type="match status" value="1"/>
</dbReference>
<dbReference type="SUPFAM" id="SSF54893">
    <property type="entry name" value="Aspartate carbamoyltransferase, Regulatory-chain, N-terminal domain"/>
    <property type="match status" value="1"/>
</dbReference>
<name>PYRI_PYRIL</name>
<accession>A1RRV1</accession>
<comment type="function">
    <text evidence="1">Involved in allosteric regulation of aspartate carbamoyltransferase.</text>
</comment>
<comment type="cofactor">
    <cofactor evidence="1">
        <name>Zn(2+)</name>
        <dbReference type="ChEBI" id="CHEBI:29105"/>
    </cofactor>
    <text evidence="1">Binds 1 zinc ion per subunit.</text>
</comment>
<comment type="subunit">
    <text evidence="1">Contains catalytic and regulatory chains.</text>
</comment>
<comment type="similarity">
    <text evidence="1">Belongs to the PyrI family.</text>
</comment>
<comment type="sequence caution" evidence="2">
    <conflict type="erroneous initiation">
        <sequence resource="EMBL-CDS" id="ABL87683"/>
    </conflict>
</comment>